<organism>
    <name type="scientific">Kosmotoga olearia (strain ATCC BAA-1733 / DSM 21960 / TBF 19.5.1)</name>
    <dbReference type="NCBI Taxonomy" id="521045"/>
    <lineage>
        <taxon>Bacteria</taxon>
        <taxon>Thermotogati</taxon>
        <taxon>Thermotogota</taxon>
        <taxon>Thermotogae</taxon>
        <taxon>Kosmotogales</taxon>
        <taxon>Kosmotogaceae</taxon>
        <taxon>Kosmotoga</taxon>
    </lineage>
</organism>
<sequence>MFISFEGIDGSGKSTQVALFREYLERNSMEYVFIREPGGTQAGEDIREILLHNEYKLFPETELLLFMASRAQIVREVIIPALKKKKLVLADRFLDSSVAYQGYGRGLSIQMVTTLNEFSTGGVTPHLTLFIDVPVDVAVKRMRREMKHDKIEMESLDFFKRVRQGYLELAKRDPKRILVIDGTMSVEKIHEQVVKEFLLCLKKLGHGL</sequence>
<accession>C5CHP2</accession>
<feature type="chain" id="PRO_1000203620" description="Thymidylate kinase">
    <location>
        <begin position="1"/>
        <end position="208"/>
    </location>
</feature>
<feature type="binding site" evidence="1">
    <location>
        <begin position="7"/>
        <end position="14"/>
    </location>
    <ligand>
        <name>ATP</name>
        <dbReference type="ChEBI" id="CHEBI:30616"/>
    </ligand>
</feature>
<dbReference type="EC" id="2.7.4.9" evidence="1"/>
<dbReference type="EMBL" id="CP001634">
    <property type="protein sequence ID" value="ACR80718.1"/>
    <property type="molecule type" value="Genomic_DNA"/>
</dbReference>
<dbReference type="RefSeq" id="WP_015869359.1">
    <property type="nucleotide sequence ID" value="NC_012785.1"/>
</dbReference>
<dbReference type="SMR" id="C5CHP2"/>
<dbReference type="STRING" id="521045.Kole_2040"/>
<dbReference type="KEGG" id="kol:Kole_2040"/>
<dbReference type="eggNOG" id="COG0125">
    <property type="taxonomic scope" value="Bacteria"/>
</dbReference>
<dbReference type="HOGENOM" id="CLU_049131_0_2_0"/>
<dbReference type="OrthoDB" id="9774907at2"/>
<dbReference type="Proteomes" id="UP000002382">
    <property type="component" value="Chromosome"/>
</dbReference>
<dbReference type="GO" id="GO:0005829">
    <property type="term" value="C:cytosol"/>
    <property type="evidence" value="ECO:0007669"/>
    <property type="project" value="TreeGrafter"/>
</dbReference>
<dbReference type="GO" id="GO:0005524">
    <property type="term" value="F:ATP binding"/>
    <property type="evidence" value="ECO:0007669"/>
    <property type="project" value="UniProtKB-UniRule"/>
</dbReference>
<dbReference type="GO" id="GO:0004798">
    <property type="term" value="F:dTMP kinase activity"/>
    <property type="evidence" value="ECO:0007669"/>
    <property type="project" value="UniProtKB-UniRule"/>
</dbReference>
<dbReference type="GO" id="GO:0006233">
    <property type="term" value="P:dTDP biosynthetic process"/>
    <property type="evidence" value="ECO:0007669"/>
    <property type="project" value="InterPro"/>
</dbReference>
<dbReference type="GO" id="GO:0006235">
    <property type="term" value="P:dTTP biosynthetic process"/>
    <property type="evidence" value="ECO:0007669"/>
    <property type="project" value="UniProtKB-UniRule"/>
</dbReference>
<dbReference type="GO" id="GO:0006227">
    <property type="term" value="P:dUDP biosynthetic process"/>
    <property type="evidence" value="ECO:0007669"/>
    <property type="project" value="TreeGrafter"/>
</dbReference>
<dbReference type="CDD" id="cd01672">
    <property type="entry name" value="TMPK"/>
    <property type="match status" value="1"/>
</dbReference>
<dbReference type="FunFam" id="3.40.50.300:FF:000225">
    <property type="entry name" value="Thymidylate kinase"/>
    <property type="match status" value="1"/>
</dbReference>
<dbReference type="Gene3D" id="3.40.50.300">
    <property type="entry name" value="P-loop containing nucleotide triphosphate hydrolases"/>
    <property type="match status" value="1"/>
</dbReference>
<dbReference type="HAMAP" id="MF_00165">
    <property type="entry name" value="Thymidylate_kinase"/>
    <property type="match status" value="1"/>
</dbReference>
<dbReference type="InterPro" id="IPR027417">
    <property type="entry name" value="P-loop_NTPase"/>
</dbReference>
<dbReference type="InterPro" id="IPR039430">
    <property type="entry name" value="Thymidylate_kin-like_dom"/>
</dbReference>
<dbReference type="InterPro" id="IPR018094">
    <property type="entry name" value="Thymidylate_kinase"/>
</dbReference>
<dbReference type="NCBIfam" id="TIGR00041">
    <property type="entry name" value="DTMP_kinase"/>
    <property type="match status" value="1"/>
</dbReference>
<dbReference type="PANTHER" id="PTHR10344">
    <property type="entry name" value="THYMIDYLATE KINASE"/>
    <property type="match status" value="1"/>
</dbReference>
<dbReference type="PANTHER" id="PTHR10344:SF4">
    <property type="entry name" value="UMP-CMP KINASE 2, MITOCHONDRIAL"/>
    <property type="match status" value="1"/>
</dbReference>
<dbReference type="Pfam" id="PF02223">
    <property type="entry name" value="Thymidylate_kin"/>
    <property type="match status" value="1"/>
</dbReference>
<dbReference type="SUPFAM" id="SSF52540">
    <property type="entry name" value="P-loop containing nucleoside triphosphate hydrolases"/>
    <property type="match status" value="1"/>
</dbReference>
<reference key="1">
    <citation type="submission" date="2009-06" db="EMBL/GenBank/DDBJ databases">
        <title>Complete sequence of Thermotogales bacterium TBF 19.5.1.</title>
        <authorList>
            <consortium name="US DOE Joint Genome Institute"/>
            <person name="Lucas S."/>
            <person name="Copeland A."/>
            <person name="Lapidus A."/>
            <person name="Glavina del Rio T."/>
            <person name="Tice H."/>
            <person name="Bruce D."/>
            <person name="Goodwin L."/>
            <person name="Pitluck S."/>
            <person name="Chertkov O."/>
            <person name="Brettin T."/>
            <person name="Detter J.C."/>
            <person name="Han C."/>
            <person name="Schmutz J."/>
            <person name="Larimer F."/>
            <person name="Land M."/>
            <person name="Hauser L."/>
            <person name="Kyrpides N."/>
            <person name="Ovchinnikova G."/>
            <person name="Noll K."/>
        </authorList>
    </citation>
    <scope>NUCLEOTIDE SEQUENCE [LARGE SCALE GENOMIC DNA]</scope>
    <source>
        <strain>ATCC BAA-1733 / DSM 21960 / TBF 19.5.1</strain>
    </source>
</reference>
<name>KTHY_KOSOT</name>
<gene>
    <name evidence="1" type="primary">tmk</name>
    <name type="ordered locus">Kole_2040</name>
</gene>
<protein>
    <recommendedName>
        <fullName evidence="1">Thymidylate kinase</fullName>
        <ecNumber evidence="1">2.7.4.9</ecNumber>
    </recommendedName>
    <alternativeName>
        <fullName evidence="1">dTMP kinase</fullName>
    </alternativeName>
</protein>
<keyword id="KW-0067">ATP-binding</keyword>
<keyword id="KW-0418">Kinase</keyword>
<keyword id="KW-0545">Nucleotide biosynthesis</keyword>
<keyword id="KW-0547">Nucleotide-binding</keyword>
<keyword id="KW-1185">Reference proteome</keyword>
<keyword id="KW-0808">Transferase</keyword>
<proteinExistence type="inferred from homology"/>
<comment type="function">
    <text evidence="1">Phosphorylation of dTMP to form dTDP in both de novo and salvage pathways of dTTP synthesis.</text>
</comment>
<comment type="catalytic activity">
    <reaction evidence="1">
        <text>dTMP + ATP = dTDP + ADP</text>
        <dbReference type="Rhea" id="RHEA:13517"/>
        <dbReference type="ChEBI" id="CHEBI:30616"/>
        <dbReference type="ChEBI" id="CHEBI:58369"/>
        <dbReference type="ChEBI" id="CHEBI:63528"/>
        <dbReference type="ChEBI" id="CHEBI:456216"/>
        <dbReference type="EC" id="2.7.4.9"/>
    </reaction>
</comment>
<comment type="similarity">
    <text evidence="1">Belongs to the thymidylate kinase family.</text>
</comment>
<evidence type="ECO:0000255" key="1">
    <source>
        <dbReference type="HAMAP-Rule" id="MF_00165"/>
    </source>
</evidence>